<protein>
    <recommendedName>
        <fullName evidence="1">NAD(P)H-quinone oxidoreductase subunit 2 B, chloroplastic</fullName>
        <ecNumber evidence="1">7.1.1.-</ecNumber>
    </recommendedName>
    <alternativeName>
        <fullName evidence="1">NAD(P)H dehydrogenase, subunit 2 B</fullName>
    </alternativeName>
    <alternativeName>
        <fullName evidence="1">NADH-plastoquinone oxidoreductase subunit 2 B</fullName>
    </alternativeName>
</protein>
<gene>
    <name evidence="1" type="primary">ndhB2</name>
</gene>
<name>NU2C2_ANTAG</name>
<sequence length="500" mass="55243">MKLDFGSFLSDGSSILPECILISSLIIILLIDLTSEKKTYWLYFISLTSLIISITVLLFQLKEEPIFSFSGSFQTDGFNGIFRISIAFSSLLCIPLSMEYMKCTKMAITESLIFLLTATIGGMFLCGANDLIIIFITLECLSLSSYLLSGYTKKDVRSNEAAMKYLLMGGASSSILAYGFSWLYGLSGGKIQLQEIFNGLINTQMYNSTSISIVLIFIIAGIAFKLSLVPFHQWTPDVYEGAPTSVIAFFSVTSKIAGLALATRIFNTVFFSSLNEWHLILEIIAILSMILGNFIAITQTSMKRMLAYSSISQIGYFMIGVIAGDSNGYASMITYMLFYIFMNLGTFACITLFGLRTGTDNIRDYAGLYKKDPLLASFLALSLLSLGGIPPLAGFFGKLYLFWCGWKAGLYLSVSVGLFTSVISIYYYLRIVKLIVTKENEETTSYIRKYKTSSNYLVSKSPIEFSIIICVIGSTFSGIVINPVIAIVEKTISLSSFINN</sequence>
<keyword id="KW-0150">Chloroplast</keyword>
<keyword id="KW-0472">Membrane</keyword>
<keyword id="KW-0520">NAD</keyword>
<keyword id="KW-0521">NADP</keyword>
<keyword id="KW-0934">Plastid</keyword>
<keyword id="KW-0618">Plastoquinone</keyword>
<keyword id="KW-0874">Quinone</keyword>
<keyword id="KW-0691">RNA editing</keyword>
<keyword id="KW-0793">Thylakoid</keyword>
<keyword id="KW-1278">Translocase</keyword>
<keyword id="KW-0812">Transmembrane</keyword>
<keyword id="KW-1133">Transmembrane helix</keyword>
<keyword id="KW-0813">Transport</keyword>
<dbReference type="EC" id="7.1.1.-" evidence="1"/>
<dbReference type="EMBL" id="AB086179">
    <property type="protein sequence ID" value="BAC55413.1"/>
    <property type="molecule type" value="Genomic_DNA"/>
</dbReference>
<dbReference type="SMR" id="P0CC31"/>
<dbReference type="GO" id="GO:0009535">
    <property type="term" value="C:chloroplast thylakoid membrane"/>
    <property type="evidence" value="ECO:0007669"/>
    <property type="project" value="UniProtKB-SubCell"/>
</dbReference>
<dbReference type="GO" id="GO:0008137">
    <property type="term" value="F:NADH dehydrogenase (ubiquinone) activity"/>
    <property type="evidence" value="ECO:0007669"/>
    <property type="project" value="InterPro"/>
</dbReference>
<dbReference type="GO" id="GO:0048038">
    <property type="term" value="F:quinone binding"/>
    <property type="evidence" value="ECO:0007669"/>
    <property type="project" value="UniProtKB-KW"/>
</dbReference>
<dbReference type="GO" id="GO:0042773">
    <property type="term" value="P:ATP synthesis coupled electron transport"/>
    <property type="evidence" value="ECO:0007669"/>
    <property type="project" value="InterPro"/>
</dbReference>
<dbReference type="GO" id="GO:0019684">
    <property type="term" value="P:photosynthesis, light reaction"/>
    <property type="evidence" value="ECO:0007669"/>
    <property type="project" value="UniProtKB-UniRule"/>
</dbReference>
<dbReference type="HAMAP" id="MF_00445">
    <property type="entry name" value="NDH1_NuoN_1"/>
    <property type="match status" value="1"/>
</dbReference>
<dbReference type="InterPro" id="IPR010096">
    <property type="entry name" value="NADH-Q_OxRdtase_suN/2"/>
</dbReference>
<dbReference type="InterPro" id="IPR001750">
    <property type="entry name" value="ND/Mrp_TM"/>
</dbReference>
<dbReference type="InterPro" id="IPR045693">
    <property type="entry name" value="Ndh2_N"/>
</dbReference>
<dbReference type="NCBIfam" id="TIGR01770">
    <property type="entry name" value="NDH_I_N"/>
    <property type="match status" value="1"/>
</dbReference>
<dbReference type="NCBIfam" id="NF002701">
    <property type="entry name" value="PRK02504.1"/>
    <property type="match status" value="1"/>
</dbReference>
<dbReference type="PANTHER" id="PTHR22773">
    <property type="entry name" value="NADH DEHYDROGENASE"/>
    <property type="match status" value="1"/>
</dbReference>
<dbReference type="Pfam" id="PF19530">
    <property type="entry name" value="Ndh2_N"/>
    <property type="match status" value="1"/>
</dbReference>
<dbReference type="Pfam" id="PF00361">
    <property type="entry name" value="Proton_antipo_M"/>
    <property type="match status" value="1"/>
</dbReference>
<dbReference type="PRINTS" id="PR01434">
    <property type="entry name" value="NADHDHGNASE5"/>
</dbReference>
<accession>P0CC31</accession>
<accession>Q85CP2</accession>
<reference key="1">
    <citation type="journal article" date="2003" name="Nucleic Acids Res.">
        <title>The complete nucleotide sequence of the hornwort (Anthoceros formosae) chloroplast genome: insight into the earliest land plants.</title>
        <authorList>
            <person name="Kugita M."/>
            <person name="Kaneko A."/>
            <person name="Yamamoto Y."/>
            <person name="Takeya Y."/>
            <person name="Matsumoto T."/>
            <person name="Yoshinaga K."/>
        </authorList>
    </citation>
    <scope>NUCLEOTIDE SEQUENCE [LARGE SCALE GENOMIC DNA]</scope>
    <scope>RNA EDITING</scope>
</reference>
<reference key="2">
    <citation type="journal article" date="2003" name="Nucleic Acids Res.">
        <title>RNA editing in hornwort chloroplasts makes more than half the genes functional.</title>
        <authorList>
            <person name="Kugita M."/>
            <person name="Yamamoto Y."/>
            <person name="Fujikawa T."/>
            <person name="Matsumoto T."/>
            <person name="Yoshinaga K."/>
        </authorList>
    </citation>
    <scope>NUCLEOTIDE SEQUENCE [MRNA]</scope>
    <scope>RNA EDITING</scope>
    <source>
        <tissue>Thallus</tissue>
    </source>
</reference>
<proteinExistence type="evidence at transcript level"/>
<feature type="chain" id="PRO_0000391253" description="NAD(P)H-quinone oxidoreductase subunit 2 B, chloroplastic">
    <location>
        <begin position="1"/>
        <end position="500"/>
    </location>
</feature>
<feature type="transmembrane region" description="Helical" evidence="1">
    <location>
        <begin position="14"/>
        <end position="34"/>
    </location>
</feature>
<feature type="transmembrane region" description="Helical" evidence="1">
    <location>
        <begin position="41"/>
        <end position="61"/>
    </location>
</feature>
<feature type="transmembrane region" description="Helical" evidence="1">
    <location>
        <begin position="78"/>
        <end position="98"/>
    </location>
</feature>
<feature type="transmembrane region" description="Helical" evidence="1">
    <location>
        <begin position="116"/>
        <end position="136"/>
    </location>
</feature>
<feature type="transmembrane region" description="Helical" evidence="1">
    <location>
        <begin position="166"/>
        <end position="186"/>
    </location>
</feature>
<feature type="transmembrane region" description="Helical" evidence="1">
    <location>
        <begin position="211"/>
        <end position="231"/>
    </location>
</feature>
<feature type="transmembrane region" description="Helical" evidence="1">
    <location>
        <begin position="242"/>
        <end position="262"/>
    </location>
</feature>
<feature type="transmembrane region" description="Helical" evidence="1">
    <location>
        <begin position="277"/>
        <end position="297"/>
    </location>
</feature>
<feature type="transmembrane region" description="Helical" evidence="1">
    <location>
        <begin position="305"/>
        <end position="325"/>
    </location>
</feature>
<feature type="transmembrane region" description="Helical" evidence="1">
    <location>
        <begin position="335"/>
        <end position="355"/>
    </location>
</feature>
<feature type="transmembrane region" description="Helical" evidence="1">
    <location>
        <begin position="376"/>
        <end position="396"/>
    </location>
</feature>
<feature type="transmembrane region" description="Helical" evidence="1">
    <location>
        <begin position="409"/>
        <end position="429"/>
    </location>
</feature>
<feature type="transmembrane region" description="Helical" evidence="1">
    <location>
        <begin position="467"/>
        <end position="487"/>
    </location>
</feature>
<evidence type="ECO:0000255" key="1">
    <source>
        <dbReference type="HAMAP-Rule" id="MF_00445"/>
    </source>
</evidence>
<evidence type="ECO:0000269" key="2">
    <source>
    </source>
</evidence>
<evidence type="ECO:0000269" key="3">
    <source>
    </source>
</evidence>
<comment type="function">
    <text evidence="1">NDH shuttles electrons from NAD(P)H:plastoquinone, via FMN and iron-sulfur (Fe-S) centers, to quinones in the photosynthetic chain and possibly in a chloroplast respiratory chain. The immediate electron acceptor for the enzyme in this species is believed to be plastoquinone. Couples the redox reaction to proton translocation, and thus conserves the redox energy in a proton gradient.</text>
</comment>
<comment type="catalytic activity">
    <reaction evidence="1">
        <text>a plastoquinone + NADH + (n+1) H(+)(in) = a plastoquinol + NAD(+) + n H(+)(out)</text>
        <dbReference type="Rhea" id="RHEA:42608"/>
        <dbReference type="Rhea" id="RHEA-COMP:9561"/>
        <dbReference type="Rhea" id="RHEA-COMP:9562"/>
        <dbReference type="ChEBI" id="CHEBI:15378"/>
        <dbReference type="ChEBI" id="CHEBI:17757"/>
        <dbReference type="ChEBI" id="CHEBI:57540"/>
        <dbReference type="ChEBI" id="CHEBI:57945"/>
        <dbReference type="ChEBI" id="CHEBI:62192"/>
    </reaction>
</comment>
<comment type="catalytic activity">
    <reaction evidence="1">
        <text>a plastoquinone + NADPH + (n+1) H(+)(in) = a plastoquinol + NADP(+) + n H(+)(out)</text>
        <dbReference type="Rhea" id="RHEA:42612"/>
        <dbReference type="Rhea" id="RHEA-COMP:9561"/>
        <dbReference type="Rhea" id="RHEA-COMP:9562"/>
        <dbReference type="ChEBI" id="CHEBI:15378"/>
        <dbReference type="ChEBI" id="CHEBI:17757"/>
        <dbReference type="ChEBI" id="CHEBI:57783"/>
        <dbReference type="ChEBI" id="CHEBI:58349"/>
        <dbReference type="ChEBI" id="CHEBI:62192"/>
    </reaction>
</comment>
<comment type="subunit">
    <text evidence="1">NDH is composed of at least 16 different subunits, 5 of which are encoded in the nucleus.</text>
</comment>
<comment type="subcellular location">
    <subcellularLocation>
        <location evidence="1">Plastid</location>
        <location evidence="1">Chloroplast thylakoid membrane</location>
        <topology evidence="1">Multi-pass membrane protein</topology>
    </subcellularLocation>
</comment>
<comment type="RNA editing">
    <location>
        <position position="89" evidence="2 3"/>
    </location>
    <location>
        <position position="120" evidence="2 3"/>
    </location>
    <location>
        <position position="145" evidence="2 3"/>
    </location>
    <location>
        <position position="157" evidence="2 3"/>
    </location>
    <location>
        <position position="158" evidence="2 3"/>
    </location>
    <location>
        <position position="167" evidence="2 3"/>
    </location>
    <location>
        <position position="174" evidence="2 3"/>
    </location>
    <location>
        <position position="180" evidence="2 3"/>
    </location>
    <location>
        <position position="197" evidence="2 3"/>
    </location>
    <location>
        <position position="294" evidence="2 3"/>
    </location>
    <location>
        <position position="310" evidence="2 3"/>
    </location>
    <location>
        <position position="335" evidence="2 3"/>
    </location>
    <location>
        <position position="341" evidence="2 3"/>
    </location>
    <location>
        <position position="368" evidence="2 3"/>
    </location>
    <location>
        <position position="373" evidence="2 3"/>
    </location>
    <location>
        <position position="379" evidence="2 3"/>
    </location>
    <location>
        <position position="399" evidence="2 3"/>
    </location>
    <location>
        <position position="402" evidence="2 3"/>
    </location>
    <location>
        <position position="454" evidence="2 3"/>
    </location>
    <location>
        <position position="476" evidence="2 3"/>
    </location>
    <text>The nonsense codon at position 157 is modified to a sense codon.</text>
</comment>
<comment type="similarity">
    <text evidence="1">Belongs to the complex I subunit 2 family.</text>
</comment>
<geneLocation type="chloroplast"/>
<organism>
    <name type="scientific">Anthoceros angustus</name>
    <name type="common">Hornwort</name>
    <name type="synonym">Anthoceros formosae</name>
    <dbReference type="NCBI Taxonomy" id="48387"/>
    <lineage>
        <taxon>Eukaryota</taxon>
        <taxon>Viridiplantae</taxon>
        <taxon>Streptophyta</taxon>
        <taxon>Embryophyta</taxon>
        <taxon>Anthocerotophyta</taxon>
        <taxon>Anthocerotopsida</taxon>
        <taxon>Anthocerotidae</taxon>
        <taxon>Anthocerotales</taxon>
        <taxon>Anthocerotaceae</taxon>
        <taxon>Anthoceros</taxon>
    </lineage>
</organism>